<proteinExistence type="evidence at protein level"/>
<evidence type="ECO:0000250" key="1">
    <source>
        <dbReference type="UniProtKB" id="A0A0H2XIV9"/>
    </source>
</evidence>
<evidence type="ECO:0000256" key="2">
    <source>
        <dbReference type="SAM" id="MobiDB-lite"/>
    </source>
</evidence>
<evidence type="ECO:0000269" key="3">
    <source>
    </source>
</evidence>
<evidence type="ECO:0000303" key="4">
    <source>
    </source>
</evidence>
<evidence type="ECO:0000305" key="5"/>
<evidence type="ECO:0000305" key="6">
    <source>
    </source>
</evidence>
<evidence type="ECO:0007829" key="7">
    <source>
        <dbReference type="PDB" id="8GUN"/>
    </source>
</evidence>
<protein>
    <recommendedName>
        <fullName>Type VII secretion system protein EssD</fullName>
    </recommendedName>
    <alternativeName>
        <fullName evidence="4">Nuclease toxin EssD</fullName>
    </alternativeName>
</protein>
<organism>
    <name type="scientific">Staphylococcus aureus (strain NCTC 8325 / PS 47)</name>
    <dbReference type="NCBI Taxonomy" id="93061"/>
    <lineage>
        <taxon>Bacteria</taxon>
        <taxon>Bacillati</taxon>
        <taxon>Bacillota</taxon>
        <taxon>Bacilli</taxon>
        <taxon>Bacillales</taxon>
        <taxon>Staphylococcaceae</taxon>
        <taxon>Staphylococcus</taxon>
    </lineage>
</organism>
<reference key="1">
    <citation type="book" date="2006" name="Gram positive pathogens, 2nd edition">
        <title>The Staphylococcus aureus NCTC 8325 genome.</title>
        <editorList>
            <person name="Fischetti V."/>
            <person name="Novick R."/>
            <person name="Ferretti J."/>
            <person name="Portnoy D."/>
            <person name="Rood J."/>
        </editorList>
        <authorList>
            <person name="Gillaspy A.F."/>
            <person name="Worrell V."/>
            <person name="Orvis J."/>
            <person name="Roe B.A."/>
            <person name="Dyer D.W."/>
            <person name="Iandolo J.J."/>
        </authorList>
    </citation>
    <scope>NUCLEOTIDE SEQUENCE [LARGE SCALE GENOMIC DNA]</scope>
    <source>
        <strain>NCTC 8325 / PS 47</strain>
    </source>
</reference>
<reference key="2">
    <citation type="journal article" date="2016" name="Nat. Microbiol.">
        <title>The type VII secretion system of Staphylococcus aureus secretes a nuclease toxin that targets competitor bacteria.</title>
        <authorList>
            <person name="Cao Z."/>
            <person name="Casabona M.G."/>
            <person name="Kneuper H."/>
            <person name="Chalmers J.D."/>
            <person name="Palmer T."/>
        </authorList>
    </citation>
    <scope>FUNCTION</scope>
    <scope>MUTAGENESIS OF HIS-528</scope>
    <scope>SUBCELLULAR LOCATION</scope>
    <scope>INTERACTION WITH ESSG AND ESSE</scope>
    <source>
        <strain>NCTC 8325 / PS 47</strain>
    </source>
</reference>
<name>ESSD_STAA8</name>
<gene>
    <name type="primary">essD</name>
    <name evidence="4" type="synonym">esaD</name>
    <name type="ordered locus">SAOUHSC_00268</name>
</gene>
<comment type="function">
    <text evidence="1 3">Component of the type VII secretion system (Ess). Plays a role in Ess secretion during infection. Required for the efficient secretion of EsxA. Required for abscess formation and staphylococcal persistence in host tissues (By similarity). Possesses a toxic DNase activity that is modulated by EssG by forming a nuclease toxin-antitoxin pair. This nuclease toxin targets competitor bacteria (PubMed:27723728).</text>
</comment>
<comment type="subunit">
    <text evidence="3">Interacts (via C-terminal) with EssG; this interaction blocks EssD activity (PubMed:27723728). Interacts with EssE (PubMed:27723728).</text>
</comment>
<comment type="subcellular location">
    <subcellularLocation>
        <location evidence="3">Secreted</location>
    </subcellularLocation>
    <subcellularLocation>
        <location evidence="1">Cell membrane</location>
    </subcellularLocation>
    <text evidence="3">Released from the cell in a form that is immediately active while EsaG partner protein remains in the producing cell where it may potentially serve further protective functions.</text>
</comment>
<comment type="similarity">
    <text evidence="5">Belongs to the EssD family.</text>
</comment>
<keyword id="KW-0002">3D-structure</keyword>
<keyword id="KW-1003">Cell membrane</keyword>
<keyword id="KW-0472">Membrane</keyword>
<keyword id="KW-1185">Reference proteome</keyword>
<keyword id="KW-0964">Secreted</keyword>
<keyword id="KW-0843">Virulence</keyword>
<feature type="chain" id="PRO_0000448084" description="Type VII secretion system protein EssD">
    <location>
        <begin position="1"/>
        <end position="614"/>
    </location>
</feature>
<feature type="region of interest" description="Disordered" evidence="2">
    <location>
        <begin position="417"/>
        <end position="445"/>
    </location>
</feature>
<feature type="compositionally biased region" description="Basic and acidic residues" evidence="2">
    <location>
        <begin position="423"/>
        <end position="435"/>
    </location>
</feature>
<feature type="active site" evidence="6">
    <location>
        <position position="528"/>
    </location>
</feature>
<feature type="mutagenesis site" description="Partial loss of DNase activity." evidence="3">
    <original>H</original>
    <variation>A</variation>
    <location>
        <position position="528"/>
    </location>
</feature>
<feature type="strand" evidence="7">
    <location>
        <begin position="453"/>
        <end position="455"/>
    </location>
</feature>
<feature type="strand" evidence="7">
    <location>
        <begin position="462"/>
        <end position="464"/>
    </location>
</feature>
<feature type="turn" evidence="7">
    <location>
        <begin position="465"/>
        <end position="468"/>
    </location>
</feature>
<feature type="strand" evidence="7">
    <location>
        <begin position="472"/>
        <end position="477"/>
    </location>
</feature>
<feature type="strand" evidence="7">
    <location>
        <begin position="483"/>
        <end position="486"/>
    </location>
</feature>
<feature type="strand" evidence="7">
    <location>
        <begin position="492"/>
        <end position="499"/>
    </location>
</feature>
<feature type="helix" evidence="7">
    <location>
        <begin position="510"/>
        <end position="514"/>
    </location>
</feature>
<feature type="helix" evidence="7">
    <location>
        <begin position="517"/>
        <end position="519"/>
    </location>
</feature>
<feature type="strand" evidence="7">
    <location>
        <begin position="524"/>
        <end position="530"/>
    </location>
</feature>
<feature type="helix" evidence="7">
    <location>
        <begin position="532"/>
        <end position="534"/>
    </location>
</feature>
<feature type="turn" evidence="7">
    <location>
        <begin position="540"/>
        <end position="542"/>
    </location>
</feature>
<feature type="strand" evidence="7">
    <location>
        <begin position="543"/>
        <end position="547"/>
    </location>
</feature>
<feature type="helix" evidence="7">
    <location>
        <begin position="548"/>
        <end position="551"/>
    </location>
</feature>
<feature type="helix" evidence="7">
    <location>
        <begin position="559"/>
        <end position="572"/>
    </location>
</feature>
<feature type="strand" evidence="7">
    <location>
        <begin position="577"/>
        <end position="585"/>
    </location>
</feature>
<feature type="strand" evidence="7">
    <location>
        <begin position="594"/>
        <end position="602"/>
    </location>
</feature>
<feature type="strand" evidence="7">
    <location>
        <begin position="605"/>
        <end position="612"/>
    </location>
</feature>
<accession>Q2G179</accession>
<sequence length="614" mass="68318">MTKDIEYLTADYDNEKSSIQSVIDAIEGQDFLDVDTTMDDAVSDVSSLDEDGAISLTSSVVGPQGSKLMGYYQNELYDYASQLDSKMKEIIDTPFIEDIDKAFKGITNVKLENILIKNGGGHGRDTYGASGKIAKGDAKKSDSDVYSIDEILKSDQEFVKVIDQHYKEMKKEDKKLSKSDFEKMMTQGASCDYMTVAEAEELEEQKKKEEAIEIAALAGMVVLSCINPVAGAVAIGAYSAYSAANAATGKNIVTGRKLSKEERIMEGLSLIPLPGMGFLKGAGKSLMKLGFKGGEKFAVKTGLQKTMQQAVSRISPKMGMMKNSVLNQSRNFAQNTHVGQMLSNMRGQATHTVQQSRNWIGQQAQNVKRIVNNGLDKEIAHPFKQQLAPAGMGGIKFAETTTLRNMGQNIKRAVTPQNHVTHGPKDSMVRSEGKHSISSHEMNSSKYVESPNYTKVEFGEHYARLRPKKLKANIEYTTPTGHIYRTDHKGRIKEVYVDNLSLKDGDRNSHAQRTVGGEDRLPDDDGGHLIARMFGGSKDIDNLVAQSKFINRPFKEKGHWYNLEKEWQEFLNSGKEVKNIKMEVKYSGNSQRPTIFKVEYEINGERNIRRILNK</sequence>
<dbReference type="EMBL" id="CP000253">
    <property type="protein sequence ID" value="ABD29441.1"/>
    <property type="molecule type" value="Genomic_DNA"/>
</dbReference>
<dbReference type="RefSeq" id="WP_000159025.1">
    <property type="nucleotide sequence ID" value="NZ_LS483365.1"/>
</dbReference>
<dbReference type="RefSeq" id="YP_498861.1">
    <property type="nucleotide sequence ID" value="NC_007795.1"/>
</dbReference>
<dbReference type="PDB" id="8GUN">
    <property type="method" value="X-ray"/>
    <property type="resolution" value="2.30 A"/>
    <property type="chains" value="A/B=440-614"/>
</dbReference>
<dbReference type="PDB" id="8GUO">
    <property type="method" value="X-ray"/>
    <property type="resolution" value="2.59 A"/>
    <property type="chains" value="B=451-614"/>
</dbReference>
<dbReference type="PDBsum" id="8GUN"/>
<dbReference type="PDBsum" id="8GUO"/>
<dbReference type="SMR" id="Q2G179"/>
<dbReference type="STRING" id="93061.SAOUHSC_00268"/>
<dbReference type="GeneID" id="3919209"/>
<dbReference type="KEGG" id="sao:SAOUHSC_00268"/>
<dbReference type="PATRIC" id="fig|93061.5.peg.246"/>
<dbReference type="HOGENOM" id="CLU_031044_1_0_9"/>
<dbReference type="OrthoDB" id="2168558at2"/>
<dbReference type="Proteomes" id="UP000008816">
    <property type="component" value="Chromosome"/>
</dbReference>
<dbReference type="GO" id="GO:0005576">
    <property type="term" value="C:extracellular region"/>
    <property type="evidence" value="ECO:0007669"/>
    <property type="project" value="UniProtKB-SubCell"/>
</dbReference>
<dbReference type="GO" id="GO:0005886">
    <property type="term" value="C:plasma membrane"/>
    <property type="evidence" value="ECO:0007669"/>
    <property type="project" value="UniProtKB-SubCell"/>
</dbReference>
<dbReference type="Gene3D" id="3.40.570.10">
    <property type="entry name" value="Extracellular Endonuclease, subunit A"/>
    <property type="match status" value="1"/>
</dbReference>
<dbReference type="InterPro" id="IPR051768">
    <property type="entry name" value="Bact_secretion_toxin"/>
</dbReference>
<dbReference type="InterPro" id="IPR044929">
    <property type="entry name" value="DNA/RNA_non-sp_Endonuclease_sf"/>
</dbReference>
<dbReference type="InterPro" id="IPR044927">
    <property type="entry name" value="Endonuclea_NS_2"/>
</dbReference>
<dbReference type="InterPro" id="IPR027797">
    <property type="entry name" value="PT-TG_dom"/>
</dbReference>
<dbReference type="PANTHER" id="PTHR34976">
    <property type="entry name" value="RIBONUCLEASE YQCG-RELATED"/>
    <property type="match status" value="1"/>
</dbReference>
<dbReference type="PANTHER" id="PTHR34976:SF2">
    <property type="entry name" value="TYPE VII SECRETION SYSTEM PROTEIN ESSD"/>
    <property type="match status" value="1"/>
</dbReference>
<dbReference type="Pfam" id="PF13930">
    <property type="entry name" value="Endonuclea_NS_2"/>
    <property type="match status" value="1"/>
</dbReference>
<dbReference type="Pfam" id="PF14449">
    <property type="entry name" value="PT-TG"/>
    <property type="match status" value="1"/>
</dbReference>